<evidence type="ECO:0000255" key="1">
    <source>
        <dbReference type="HAMAP-Rule" id="MF_01301"/>
    </source>
</evidence>
<organism>
    <name type="scientific">Shigella flexneri serotype 5b (strain 8401)</name>
    <dbReference type="NCBI Taxonomy" id="373384"/>
    <lineage>
        <taxon>Bacteria</taxon>
        <taxon>Pseudomonadati</taxon>
        <taxon>Pseudomonadota</taxon>
        <taxon>Gammaproteobacteria</taxon>
        <taxon>Enterobacterales</taxon>
        <taxon>Enterobacteriaceae</taxon>
        <taxon>Shigella</taxon>
    </lineage>
</organism>
<feature type="signal peptide" evidence="1">
    <location>
        <begin position="1"/>
        <end position="25"/>
    </location>
</feature>
<feature type="chain" id="PRO_0000290224" description="Maltoporin">
    <location>
        <begin position="26"/>
        <end position="446"/>
    </location>
</feature>
<feature type="site" description="Greasy slide, important in sugar transport" evidence="1">
    <location>
        <position position="31"/>
    </location>
</feature>
<feature type="site" description="Greasy slide, important in sugar transport" evidence="1">
    <location>
        <position position="66"/>
    </location>
</feature>
<feature type="site" description="Greasy slide, important in sugar transport" evidence="1">
    <location>
        <position position="99"/>
    </location>
</feature>
<feature type="site" description="Important in sugar transport" evidence="1">
    <location>
        <position position="143"/>
    </location>
</feature>
<feature type="site" description="Greasy slide, important in sugar transport" evidence="1">
    <location>
        <position position="252"/>
    </location>
</feature>
<feature type="site" description="Greasy slide, important in sugar transport" evidence="1">
    <location>
        <position position="383"/>
    </location>
</feature>
<feature type="site" description="Greasy slide, important in sugar transport" evidence="1">
    <location>
        <position position="445"/>
    </location>
</feature>
<keyword id="KW-0998">Cell outer membrane</keyword>
<keyword id="KW-0406">Ion transport</keyword>
<keyword id="KW-0472">Membrane</keyword>
<keyword id="KW-0626">Porin</keyword>
<keyword id="KW-0732">Signal</keyword>
<keyword id="KW-0762">Sugar transport</keyword>
<keyword id="KW-0812">Transmembrane</keyword>
<keyword id="KW-1134">Transmembrane beta strand</keyword>
<keyword id="KW-0813">Transport</keyword>
<proteinExistence type="inferred from homology"/>
<comment type="function">
    <text evidence="1">Involved in the transport of maltose and maltodextrins.</text>
</comment>
<comment type="catalytic activity">
    <reaction evidence="1">
        <text>beta-maltose(in) = beta-maltose(out)</text>
        <dbReference type="Rhea" id="RHEA:29731"/>
        <dbReference type="ChEBI" id="CHEBI:18147"/>
    </reaction>
</comment>
<comment type="subunit">
    <text evidence="1">Homotrimer formed of three 18-stranded antiparallel beta-barrels, containing three independent channels.</text>
</comment>
<comment type="subcellular location">
    <subcellularLocation>
        <location evidence="1">Cell outer membrane</location>
        <topology evidence="1">Multi-pass membrane protein</topology>
    </subcellularLocation>
</comment>
<comment type="induction">
    <text evidence="1">By maltose.</text>
</comment>
<comment type="similarity">
    <text evidence="1">Belongs to the porin LamB (TC 1.B.3) family.</text>
</comment>
<dbReference type="EMBL" id="CP000266">
    <property type="protein sequence ID" value="ABF06163.1"/>
    <property type="molecule type" value="Genomic_DNA"/>
</dbReference>
<dbReference type="RefSeq" id="WP_000973658.1">
    <property type="nucleotide sequence ID" value="NC_008258.1"/>
</dbReference>
<dbReference type="SMR" id="Q0SXQ2"/>
<dbReference type="GeneID" id="93777799"/>
<dbReference type="KEGG" id="sfv:SFV_4178"/>
<dbReference type="HOGENOM" id="CLU_032473_4_1_6"/>
<dbReference type="Proteomes" id="UP000000659">
    <property type="component" value="Chromosome"/>
</dbReference>
<dbReference type="GO" id="GO:0009279">
    <property type="term" value="C:cell outer membrane"/>
    <property type="evidence" value="ECO:0007669"/>
    <property type="project" value="UniProtKB-SubCell"/>
</dbReference>
<dbReference type="GO" id="GO:0046930">
    <property type="term" value="C:pore complex"/>
    <property type="evidence" value="ECO:0007669"/>
    <property type="project" value="UniProtKB-KW"/>
</dbReference>
<dbReference type="GO" id="GO:0042958">
    <property type="term" value="F:maltodextrin transmembrane transporter activity"/>
    <property type="evidence" value="ECO:0007669"/>
    <property type="project" value="InterPro"/>
</dbReference>
<dbReference type="GO" id="GO:0015481">
    <property type="term" value="F:maltose transporting porin activity"/>
    <property type="evidence" value="ECO:0007669"/>
    <property type="project" value="InterPro"/>
</dbReference>
<dbReference type="GO" id="GO:0006811">
    <property type="term" value="P:monoatomic ion transport"/>
    <property type="evidence" value="ECO:0007669"/>
    <property type="project" value="UniProtKB-KW"/>
</dbReference>
<dbReference type="CDD" id="cd01346">
    <property type="entry name" value="Maltoporin-like"/>
    <property type="match status" value="1"/>
</dbReference>
<dbReference type="FunFam" id="2.40.170.10:FF:000001">
    <property type="entry name" value="Maltoporin"/>
    <property type="match status" value="1"/>
</dbReference>
<dbReference type="Gene3D" id="2.40.170.10">
    <property type="entry name" value="Porin, LamB type"/>
    <property type="match status" value="1"/>
</dbReference>
<dbReference type="HAMAP" id="MF_01301">
    <property type="entry name" value="LamB"/>
    <property type="match status" value="1"/>
</dbReference>
<dbReference type="InterPro" id="IPR050286">
    <property type="entry name" value="G_neg_Bact_CarbUptk_Porin"/>
</dbReference>
<dbReference type="InterPro" id="IPR023738">
    <property type="entry name" value="Maltoporin"/>
</dbReference>
<dbReference type="InterPro" id="IPR003192">
    <property type="entry name" value="Porin_LamB"/>
</dbReference>
<dbReference type="InterPro" id="IPR036998">
    <property type="entry name" value="Porin_LamB_sf"/>
</dbReference>
<dbReference type="NCBIfam" id="NF006860">
    <property type="entry name" value="PRK09360.1"/>
    <property type="match status" value="1"/>
</dbReference>
<dbReference type="PANTHER" id="PTHR38762">
    <property type="entry name" value="CRYPTIC OUTER MEMBRANE PORIN BGLH-RELATED"/>
    <property type="match status" value="1"/>
</dbReference>
<dbReference type="PANTHER" id="PTHR38762:SF1">
    <property type="entry name" value="CRYPTIC OUTER MEMBRANE PORIN BGLH-RELATED"/>
    <property type="match status" value="1"/>
</dbReference>
<dbReference type="Pfam" id="PF02264">
    <property type="entry name" value="LamB"/>
    <property type="match status" value="1"/>
</dbReference>
<dbReference type="SUPFAM" id="SSF56935">
    <property type="entry name" value="Porins"/>
    <property type="match status" value="1"/>
</dbReference>
<protein>
    <recommendedName>
        <fullName evidence="1">Maltoporin</fullName>
    </recommendedName>
    <alternativeName>
        <fullName evidence="1">Maltose-inducible porin</fullName>
    </alternativeName>
</protein>
<reference key="1">
    <citation type="journal article" date="2006" name="BMC Genomics">
        <title>Complete genome sequence of Shigella flexneri 5b and comparison with Shigella flexneri 2a.</title>
        <authorList>
            <person name="Nie H."/>
            <person name="Yang F."/>
            <person name="Zhang X."/>
            <person name="Yang J."/>
            <person name="Chen L."/>
            <person name="Wang J."/>
            <person name="Xiong Z."/>
            <person name="Peng J."/>
            <person name="Sun L."/>
            <person name="Dong J."/>
            <person name="Xue Y."/>
            <person name="Xu X."/>
            <person name="Chen S."/>
            <person name="Yao Z."/>
            <person name="Shen Y."/>
            <person name="Jin Q."/>
        </authorList>
    </citation>
    <scope>NUCLEOTIDE SEQUENCE [LARGE SCALE GENOMIC DNA]</scope>
    <source>
        <strain>8401</strain>
    </source>
</reference>
<sequence>MMITLRKLPLAVAVAAGVMSAQAMAVDFHGYARSGIGWTGSGGEQQCFQTTGAQSKYRLGNECETYAELKLGQEVWKEGDKSFYFDTNVAYSVAQQNDWEATDPAFREANVQGKNLIEWLPGSTIWAGKRFYQRHDVHMIDFYYWDISGPGAGLENIDVGFGKLSLAATRSSEAGGSSSFASNNIYDYTNETANDVFDVRLAQMEINPGGTLELGVDYGRANLRDNYRLVDGASKDGWLFTAEHTQSVLKGFNKFVVQYATDSMTSQGKGLSQGSGVAFDNEKFAYNINNNGHMLRILDHGAISMGDNWDMMYVGMYQDINWDNDNGTKWWTVGIRPMYKWTPIMSTVMEIGYDNVESQRTGDKNNQYKITLAQQWQAGDSIWSRPAIRVFATYAKWDEKWGYDYNGDSKVNPNYGKAVPADFNGGSFGRGDSDEWTFGAQMEIWW</sequence>
<accession>Q0SXQ2</accession>
<name>LAMB_SHIF8</name>
<gene>
    <name evidence="1" type="primary">lamB</name>
    <name type="ordered locus">SFV_4178</name>
</gene>